<comment type="function">
    <text evidence="2 8 9">Core subunit of the mitochondrial membrane respiratory chain NADH dehydrogenase (Complex I) which catalyzes electron transfer from NADH through the respiratory chain, using ubiquinone as an electron acceptor (PubMed:14729820, PubMed:30140060). Essential for the catalytic activity and assembly of complex I (PubMed:14729820, PubMed:24028823, PubMed:30140060).</text>
</comment>
<comment type="catalytic activity">
    <reaction evidence="2 9">
        <text>a ubiquinone + NADH + 5 H(+)(in) = a ubiquinol + NAD(+) + 4 H(+)(out)</text>
        <dbReference type="Rhea" id="RHEA:29091"/>
        <dbReference type="Rhea" id="RHEA-COMP:9565"/>
        <dbReference type="Rhea" id="RHEA-COMP:9566"/>
        <dbReference type="ChEBI" id="CHEBI:15378"/>
        <dbReference type="ChEBI" id="CHEBI:16389"/>
        <dbReference type="ChEBI" id="CHEBI:17976"/>
        <dbReference type="ChEBI" id="CHEBI:57540"/>
        <dbReference type="ChEBI" id="CHEBI:57945"/>
        <dbReference type="EC" id="7.1.1.2"/>
    </reaction>
</comment>
<comment type="subunit">
    <text evidence="1 3 4 5 10">Core subunit of respiratory chain NADH dehydrogenase (Complex I) which is composed of 45 different subunits (PubMed:12611891). Interacts with NDUFAF3 (PubMed:19463981). Interacts with RAB5IF (PubMed:31536960). Found in subcomplexes containing subunits NDUFS2, MT-ND1 and NDUFA13 (PubMed:17209039, PubMed:18826940).</text>
</comment>
<comment type="interaction">
    <interactant intactId="EBI-1224896">
        <id>O75489</id>
    </interactant>
    <interactant intactId="EBI-5280499">
        <id>Q66PJ3-4</id>
        <label>ARL6IP4</label>
    </interactant>
    <organismsDiffer>false</organismsDiffer>
    <experiments>3</experiments>
</comment>
<comment type="interaction">
    <interactant intactId="EBI-1224896">
        <id>O75489</id>
    </interactant>
    <interactant intactId="EBI-12893625">
        <id>Q5JUW0-3</id>
        <label>KRBOX4</label>
    </interactant>
    <organismsDiffer>false</organismsDiffer>
    <experiments>3</experiments>
</comment>
<comment type="interaction">
    <interactant intactId="EBI-1224896">
        <id>O75489</id>
    </interactant>
    <interactant intactId="EBI-746417">
        <id>Q16718</id>
        <label>NDUFA5</label>
    </interactant>
    <organismsDiffer>false</organismsDiffer>
    <experiments>13</experiments>
</comment>
<comment type="interaction">
    <interactant intactId="EBI-1224896">
        <id>O75489</id>
    </interactant>
    <interactant intactId="EBI-1237250">
        <id>P51970</id>
        <label>NDUFA8</label>
    </interactant>
    <organismsDiffer>false</organismsDiffer>
    <experiments>5</experiments>
</comment>
<comment type="interaction">
    <interactant intactId="EBI-1224896">
        <id>O75489</id>
    </interactant>
    <interactant intactId="EBI-1224806">
        <id>O75306</id>
        <label>NDUFS2</label>
    </interactant>
    <organismsDiffer>false</organismsDiffer>
    <experiments>12</experiments>
</comment>
<comment type="interaction">
    <interactant intactId="EBI-1224896">
        <id>O75489</id>
    </interactant>
    <interactant intactId="EBI-723946">
        <id>P17152</id>
        <label>TMEM11</label>
    </interactant>
    <organismsDiffer>false</organismsDiffer>
    <experiments>3</experiments>
</comment>
<comment type="interaction">
    <interactant intactId="EBI-1224896">
        <id>O75489</id>
    </interactant>
    <interactant intactId="EBI-1390168">
        <id>Q9H8H3</id>
        <label>TMT1A</label>
    </interactant>
    <organismsDiffer>false</organismsDiffer>
    <experiments>3</experiments>
</comment>
<comment type="subcellular location">
    <subcellularLocation>
        <location evidence="4 13 14">Mitochondrion inner membrane</location>
        <topology evidence="15">Peripheral membrane protein</topology>
        <orientation evidence="4">Matrix side</orientation>
    </subcellularLocation>
</comment>
<comment type="alternative products">
    <event type="alternative splicing"/>
    <isoform>
        <id>O75489-1</id>
        <name>1</name>
        <sequence type="displayed"/>
    </isoform>
    <isoform>
        <id>O75489-2</id>
        <name>2</name>
        <sequence type="described" ref="VSP_057065 VSP_057066"/>
    </isoform>
</comment>
<comment type="disease" evidence="2 7 8 9">
    <disease id="DI-05398">
        <name>Mitochondrial complex I deficiency, nuclear type 8</name>
        <acronym>MC1DN8</acronym>
        <description>A form of mitochondrial complex I deficiency, the most common biochemical signature of mitochondrial disorders, a group of highly heterogeneous conditions characterized by defective oxidative phosphorylation, which collectively affects 1 in 5-10000 live births. Clinical disorders have variable severity, ranging from lethal neonatal disease to adult-onset neurodegenerative disorders. Phenotypes include macrocephaly with progressive leukodystrophy, non-specific encephalopathy, cardiomyopathy, myopathy, liver disease, Leigh syndrome, Leber hereditary optic neuropathy, and some forms of Parkinson disease. MC1DN8 transmission pattern is consistent with autosomal recessive inheritance.</description>
        <dbReference type="MIM" id="618230"/>
    </disease>
    <text>The disease is caused by variants affecting the gene represented in this entry.</text>
</comment>
<comment type="similarity">
    <text evidence="12">Belongs to the complex I 30 kDa subunit family.</text>
</comment>
<sequence>MAAAAVARLWWRGILGASALTRGTGRPSVLLLPVRRESAGADTRPTVRPRNDVAHKQLSAFGEYVAEILPKYVQQVQVSCFNELEVCIHPDGVIPVLTFLRDHTNAQFKSLVDLTAVDVPTRQNRFEIVYNLLSLRFNSRIRVKTYTDELTPIESAVSVFKAANWYEREIWDMFGVFFANHPDLRRILTDYGFEGHPFRKDFPLSGYVELRYDDEVKRVVAEPVELAQEFRKFDLNSPWEAFPVYRQPPESLKLEAGDKKPDAK</sequence>
<proteinExistence type="evidence at protein level"/>
<evidence type="ECO:0000269" key="1">
    <source>
    </source>
</evidence>
<evidence type="ECO:0000269" key="2">
    <source>
    </source>
</evidence>
<evidence type="ECO:0000269" key="3">
    <source>
    </source>
</evidence>
<evidence type="ECO:0000269" key="4">
    <source>
    </source>
</evidence>
<evidence type="ECO:0000269" key="5">
    <source>
    </source>
</evidence>
<evidence type="ECO:0000269" key="6">
    <source>
    </source>
</evidence>
<evidence type="ECO:0000269" key="7">
    <source>
    </source>
</evidence>
<evidence type="ECO:0000269" key="8">
    <source>
    </source>
</evidence>
<evidence type="ECO:0000269" key="9">
    <source>
    </source>
</evidence>
<evidence type="ECO:0000269" key="10">
    <source>
    </source>
</evidence>
<evidence type="ECO:0000303" key="11">
    <source>
    </source>
</evidence>
<evidence type="ECO:0000305" key="12"/>
<evidence type="ECO:0000305" key="13">
    <source>
    </source>
</evidence>
<evidence type="ECO:0000305" key="14">
    <source>
    </source>
</evidence>
<evidence type="ECO:0000305" key="15">
    <source>
    </source>
</evidence>
<evidence type="ECO:0007829" key="16">
    <source>
        <dbReference type="PDB" id="5XTB"/>
    </source>
</evidence>
<reference key="1">
    <citation type="journal article" date="1998" name="Biochem. Biophys. Res. Commun.">
        <title>cDNA sequence and chromosomal localization of the remaining three human nuclear encoded iron sulphur protein (IP) subunits of complex I: the human IP fraction is completed.</title>
        <authorList>
            <person name="Loeffen J."/>
            <person name="van den Heuvel L."/>
            <person name="Smeets R."/>
            <person name="Triepels R."/>
            <person name="Sengers R."/>
            <person name="Trijbels F."/>
            <person name="Smeitink J."/>
        </authorList>
    </citation>
    <scope>NUCLEOTIDE SEQUENCE [MRNA] (ISOFORM 1)</scope>
</reference>
<reference key="2">
    <citation type="journal article" date="2000" name="Mamm. Genome">
        <title>Human NDUFS3 gene coding for the 30-kDa subunit of mitochondrial Complex I: genomic organization and expression.</title>
        <authorList>
            <person name="Procaccio V."/>
            <person name="Lescuyer P."/>
            <person name="Bourges I."/>
            <person name="Beugnot R."/>
            <person name="Duborjal H."/>
            <person name="Depetris D."/>
            <person name="Mousson B."/>
            <person name="Montfort M.F."/>
            <person name="Smeets H."/>
            <person name="De Coo R."/>
            <person name="Issartel J.P."/>
        </authorList>
    </citation>
    <scope>NUCLEOTIDE SEQUENCE [GENOMIC DNA]</scope>
</reference>
<reference key="3">
    <citation type="journal article" date="2000" name="Proc. Natl. Acad. Sci. U.S.A.">
        <title>Gene expression profiling in the human hypothalamus-pituitary-adrenal axis and full-length cDNA cloning.</title>
        <authorList>
            <person name="Hu R.-M."/>
            <person name="Han Z.-G."/>
            <person name="Song H.-D."/>
            <person name="Peng Y.-D."/>
            <person name="Huang Q.-H."/>
            <person name="Ren S.-X."/>
            <person name="Gu Y.-J."/>
            <person name="Huang C.-H."/>
            <person name="Li Y.-B."/>
            <person name="Jiang C.-L."/>
            <person name="Fu G."/>
            <person name="Zhang Q.-H."/>
            <person name="Gu B.-W."/>
            <person name="Dai M."/>
            <person name="Mao Y.-F."/>
            <person name="Gao G.-F."/>
            <person name="Rong R."/>
            <person name="Ye M."/>
            <person name="Zhou J."/>
            <person name="Xu S.-H."/>
            <person name="Gu J."/>
            <person name="Shi J.-X."/>
            <person name="Jin W.-R."/>
            <person name="Zhang C.-K."/>
            <person name="Wu T.-M."/>
            <person name="Huang G.-Y."/>
            <person name="Chen Z."/>
            <person name="Chen M.-D."/>
            <person name="Chen J.-L."/>
        </authorList>
    </citation>
    <scope>NUCLEOTIDE SEQUENCE [LARGE SCALE MRNA] (ISOFORM 1)</scope>
    <source>
        <tissue>Pituitary</tissue>
    </source>
</reference>
<reference key="4">
    <citation type="journal article" date="2004" name="Nat. Genet.">
        <title>Complete sequencing and characterization of 21,243 full-length human cDNAs.</title>
        <authorList>
            <person name="Ota T."/>
            <person name="Suzuki Y."/>
            <person name="Nishikawa T."/>
            <person name="Otsuki T."/>
            <person name="Sugiyama T."/>
            <person name="Irie R."/>
            <person name="Wakamatsu A."/>
            <person name="Hayashi K."/>
            <person name="Sato H."/>
            <person name="Nagai K."/>
            <person name="Kimura K."/>
            <person name="Makita H."/>
            <person name="Sekine M."/>
            <person name="Obayashi M."/>
            <person name="Nishi T."/>
            <person name="Shibahara T."/>
            <person name="Tanaka T."/>
            <person name="Ishii S."/>
            <person name="Yamamoto J."/>
            <person name="Saito K."/>
            <person name="Kawai Y."/>
            <person name="Isono Y."/>
            <person name="Nakamura Y."/>
            <person name="Nagahari K."/>
            <person name="Murakami K."/>
            <person name="Yasuda T."/>
            <person name="Iwayanagi T."/>
            <person name="Wagatsuma M."/>
            <person name="Shiratori A."/>
            <person name="Sudo H."/>
            <person name="Hosoiri T."/>
            <person name="Kaku Y."/>
            <person name="Kodaira H."/>
            <person name="Kondo H."/>
            <person name="Sugawara M."/>
            <person name="Takahashi M."/>
            <person name="Kanda K."/>
            <person name="Yokoi T."/>
            <person name="Furuya T."/>
            <person name="Kikkawa E."/>
            <person name="Omura Y."/>
            <person name="Abe K."/>
            <person name="Kamihara K."/>
            <person name="Katsuta N."/>
            <person name="Sato K."/>
            <person name="Tanikawa M."/>
            <person name="Yamazaki M."/>
            <person name="Ninomiya K."/>
            <person name="Ishibashi T."/>
            <person name="Yamashita H."/>
            <person name="Murakawa K."/>
            <person name="Fujimori K."/>
            <person name="Tanai H."/>
            <person name="Kimata M."/>
            <person name="Watanabe M."/>
            <person name="Hiraoka S."/>
            <person name="Chiba Y."/>
            <person name="Ishida S."/>
            <person name="Ono Y."/>
            <person name="Takiguchi S."/>
            <person name="Watanabe S."/>
            <person name="Yosida M."/>
            <person name="Hotuta T."/>
            <person name="Kusano J."/>
            <person name="Kanehori K."/>
            <person name="Takahashi-Fujii A."/>
            <person name="Hara H."/>
            <person name="Tanase T.-O."/>
            <person name="Nomura Y."/>
            <person name="Togiya S."/>
            <person name="Komai F."/>
            <person name="Hara R."/>
            <person name="Takeuchi K."/>
            <person name="Arita M."/>
            <person name="Imose N."/>
            <person name="Musashino K."/>
            <person name="Yuuki H."/>
            <person name="Oshima A."/>
            <person name="Sasaki N."/>
            <person name="Aotsuka S."/>
            <person name="Yoshikawa Y."/>
            <person name="Matsunawa H."/>
            <person name="Ichihara T."/>
            <person name="Shiohata N."/>
            <person name="Sano S."/>
            <person name="Moriya S."/>
            <person name="Momiyama H."/>
            <person name="Satoh N."/>
            <person name="Takami S."/>
            <person name="Terashima Y."/>
            <person name="Suzuki O."/>
            <person name="Nakagawa S."/>
            <person name="Senoh A."/>
            <person name="Mizoguchi H."/>
            <person name="Goto Y."/>
            <person name="Shimizu F."/>
            <person name="Wakebe H."/>
            <person name="Hishigaki H."/>
            <person name="Watanabe T."/>
            <person name="Sugiyama A."/>
            <person name="Takemoto M."/>
            <person name="Kawakami B."/>
            <person name="Yamazaki M."/>
            <person name="Watanabe K."/>
            <person name="Kumagai A."/>
            <person name="Itakura S."/>
            <person name="Fukuzumi Y."/>
            <person name="Fujimori Y."/>
            <person name="Komiyama M."/>
            <person name="Tashiro H."/>
            <person name="Tanigami A."/>
            <person name="Fujiwara T."/>
            <person name="Ono T."/>
            <person name="Yamada K."/>
            <person name="Fujii Y."/>
            <person name="Ozaki K."/>
            <person name="Hirao M."/>
            <person name="Ohmori Y."/>
            <person name="Kawabata A."/>
            <person name="Hikiji T."/>
            <person name="Kobatake N."/>
            <person name="Inagaki H."/>
            <person name="Ikema Y."/>
            <person name="Okamoto S."/>
            <person name="Okitani R."/>
            <person name="Kawakami T."/>
            <person name="Noguchi S."/>
            <person name="Itoh T."/>
            <person name="Shigeta K."/>
            <person name="Senba T."/>
            <person name="Matsumura K."/>
            <person name="Nakajima Y."/>
            <person name="Mizuno T."/>
            <person name="Morinaga M."/>
            <person name="Sasaki M."/>
            <person name="Togashi T."/>
            <person name="Oyama M."/>
            <person name="Hata H."/>
            <person name="Watanabe M."/>
            <person name="Komatsu T."/>
            <person name="Mizushima-Sugano J."/>
            <person name="Satoh T."/>
            <person name="Shirai Y."/>
            <person name="Takahashi Y."/>
            <person name="Nakagawa K."/>
            <person name="Okumura K."/>
            <person name="Nagase T."/>
            <person name="Nomura N."/>
            <person name="Kikuchi H."/>
            <person name="Masuho Y."/>
            <person name="Yamashita R."/>
            <person name="Nakai K."/>
            <person name="Yada T."/>
            <person name="Nakamura Y."/>
            <person name="Ohara O."/>
            <person name="Isogai T."/>
            <person name="Sugano S."/>
        </authorList>
    </citation>
    <scope>NUCLEOTIDE SEQUENCE [LARGE SCALE MRNA] (ISOFORMS 1 AND 2)</scope>
    <source>
        <tissue>Amygdala</tissue>
        <tissue>Cerebellum</tissue>
    </source>
</reference>
<reference key="5">
    <citation type="journal article" date="2006" name="Nature">
        <title>Human chromosome 11 DNA sequence and analysis including novel gene identification.</title>
        <authorList>
            <person name="Taylor T.D."/>
            <person name="Noguchi H."/>
            <person name="Totoki Y."/>
            <person name="Toyoda A."/>
            <person name="Kuroki Y."/>
            <person name="Dewar K."/>
            <person name="Lloyd C."/>
            <person name="Itoh T."/>
            <person name="Takeda T."/>
            <person name="Kim D.-W."/>
            <person name="She X."/>
            <person name="Barlow K.F."/>
            <person name="Bloom T."/>
            <person name="Bruford E."/>
            <person name="Chang J.L."/>
            <person name="Cuomo C.A."/>
            <person name="Eichler E."/>
            <person name="FitzGerald M.G."/>
            <person name="Jaffe D.B."/>
            <person name="LaButti K."/>
            <person name="Nicol R."/>
            <person name="Park H.-S."/>
            <person name="Seaman C."/>
            <person name="Sougnez C."/>
            <person name="Yang X."/>
            <person name="Zimmer A.R."/>
            <person name="Zody M.C."/>
            <person name="Birren B.W."/>
            <person name="Nusbaum C."/>
            <person name="Fujiyama A."/>
            <person name="Hattori M."/>
            <person name="Rogers J."/>
            <person name="Lander E.S."/>
            <person name="Sakaki Y."/>
        </authorList>
    </citation>
    <scope>NUCLEOTIDE SEQUENCE [LARGE SCALE GENOMIC DNA]</scope>
</reference>
<reference key="6">
    <citation type="submission" date="2005-09" db="EMBL/GenBank/DDBJ databases">
        <authorList>
            <person name="Mural R.J."/>
            <person name="Istrail S."/>
            <person name="Sutton G.G."/>
            <person name="Florea L."/>
            <person name="Halpern A.L."/>
            <person name="Mobarry C.M."/>
            <person name="Lippert R."/>
            <person name="Walenz B."/>
            <person name="Shatkay H."/>
            <person name="Dew I."/>
            <person name="Miller J.R."/>
            <person name="Flanigan M.J."/>
            <person name="Edwards N.J."/>
            <person name="Bolanos R."/>
            <person name="Fasulo D."/>
            <person name="Halldorsson B.V."/>
            <person name="Hannenhalli S."/>
            <person name="Turner R."/>
            <person name="Yooseph S."/>
            <person name="Lu F."/>
            <person name="Nusskern D.R."/>
            <person name="Shue B.C."/>
            <person name="Zheng X.H."/>
            <person name="Zhong F."/>
            <person name="Delcher A.L."/>
            <person name="Huson D.H."/>
            <person name="Kravitz S.A."/>
            <person name="Mouchard L."/>
            <person name="Reinert K."/>
            <person name="Remington K.A."/>
            <person name="Clark A.G."/>
            <person name="Waterman M.S."/>
            <person name="Eichler E.E."/>
            <person name="Adams M.D."/>
            <person name="Hunkapiller M.W."/>
            <person name="Myers E.W."/>
            <person name="Venter J.C."/>
        </authorList>
    </citation>
    <scope>NUCLEOTIDE SEQUENCE [LARGE SCALE GENOMIC DNA]</scope>
</reference>
<reference key="7">
    <citation type="journal article" date="2004" name="Genome Res.">
        <title>The status, quality, and expansion of the NIH full-length cDNA project: the Mammalian Gene Collection (MGC).</title>
        <authorList>
            <consortium name="The MGC Project Team"/>
        </authorList>
    </citation>
    <scope>NUCLEOTIDE SEQUENCE [LARGE SCALE MRNA] (ISOFORM 1)</scope>
    <source>
        <tissue>Skin</tissue>
    </source>
</reference>
<reference key="8">
    <citation type="journal article" date="2009" name="Proc. Natl. Acad. Sci. U.S.A.">
        <title>Global profiling of protease cleavage sites by chemoselective labeling of protein N-termini.</title>
        <authorList>
            <person name="Xu G."/>
            <person name="Shin S.B."/>
            <person name="Jaffrey S.R."/>
        </authorList>
    </citation>
    <scope>PROTEIN SEQUENCE [LARGE SCALE ANALYSIS] OF 37-51</scope>
    <source>
        <tissue>Leukemic T-cell</tissue>
    </source>
</reference>
<reference key="9">
    <citation type="submission" date="2007-03" db="UniProtKB">
        <authorList>
            <person name="Lubec G."/>
            <person name="Vishwanath V."/>
        </authorList>
    </citation>
    <scope>PROTEIN SEQUENCE OF 126-136 AND 187-199</scope>
    <scope>IDENTIFICATION BY MASS SPECTROMETRY</scope>
    <source>
        <tissue>Brain</tissue>
        <tissue>Cajal-Retzius cell</tissue>
    </source>
</reference>
<reference key="10">
    <citation type="journal article" date="2003" name="J. Biol. Chem.">
        <title>The subunit composition of the human NADH dehydrogenase obtained by rapid one-step immunopurification.</title>
        <authorList>
            <person name="Murray J."/>
            <person name="Zhang B."/>
            <person name="Taylor S.W."/>
            <person name="Oglesbee D."/>
            <person name="Fahy E."/>
            <person name="Marusich M.F."/>
            <person name="Ghosh S.S."/>
            <person name="Capaldi R.A."/>
        </authorList>
    </citation>
    <scope>IDENTIFICATION IN THE NADH-UBIQUINONE OXIDOREDUCTASE COMPLEX</scope>
    <scope>IDENTIFICATION BY MASS SPECTROMETRY</scope>
    <scope>SUBCELLULAR LOCATION</scope>
</reference>
<reference key="11">
    <citation type="journal article" date="2007" name="J. Biol. Chem.">
        <title>Identification of mitochondrial complex I assembly intermediates by tracing tagged NDUFS3 demonstrates the entry point of mitochondrial subunits.</title>
        <authorList>
            <person name="Vogel R.O."/>
            <person name="Dieteren C.E."/>
            <person name="van den Heuvel L.P."/>
            <person name="Willems P.H."/>
            <person name="Smeitink J.A."/>
            <person name="Koopman W.J."/>
            <person name="Nijtmans L.G."/>
        </authorList>
    </citation>
    <scope>SUBUNIT</scope>
    <scope>SUBCELLULAR LOCATION</scope>
</reference>
<reference key="12">
    <citation type="journal article" date="2008" name="J. Biol. Chem.">
        <title>Subunits of mitochondrial complex I exist as part of matrix- and membrane-associated subcomplexes in living cells.</title>
        <authorList>
            <person name="Dieteren C.E."/>
            <person name="Willems P.H."/>
            <person name="Vogel R.O."/>
            <person name="Swarts H.G."/>
            <person name="Fransen J."/>
            <person name="Roepman R."/>
            <person name="Crienen G."/>
            <person name="Smeitink J.A."/>
            <person name="Nijtmans L.G."/>
            <person name="Koopman W.J."/>
        </authorList>
    </citation>
    <scope>SUBUNIT</scope>
    <scope>SUBCELLULAR LOCATION</scope>
    <scope>TOPOLOGY</scope>
</reference>
<reference key="13">
    <citation type="journal article" date="2009" name="Am. J. Hum. Genet.">
        <title>Mutations in NDUFAF3 (C3ORF60), encoding an NDUFAF4 (C6ORF66)-interacting complex I assembly protein, cause fatal neonatal mitochondrial disease.</title>
        <authorList>
            <person name="Saada A."/>
            <person name="Vogel R.O."/>
            <person name="Hoefs S.J."/>
            <person name="van den Brand M.A."/>
            <person name="Wessels H.J."/>
            <person name="Willems P.H."/>
            <person name="Venselaar H."/>
            <person name="Shaag A."/>
            <person name="Barghuti F."/>
            <person name="Reish O."/>
            <person name="Shohat M."/>
            <person name="Huynen M.A."/>
            <person name="Smeitink J.A.M."/>
            <person name="van den Heuvel L.P."/>
            <person name="Nijtmans L.G."/>
        </authorList>
    </citation>
    <scope>INTERACTION WITH NDUFAF3</scope>
</reference>
<reference key="14">
    <citation type="journal article" date="2011" name="BMC Syst. Biol.">
        <title>Initial characterization of the human central proteome.</title>
        <authorList>
            <person name="Burkard T.R."/>
            <person name="Planyavsky M."/>
            <person name="Kaupe I."/>
            <person name="Breitwieser F.P."/>
            <person name="Buerckstuemmer T."/>
            <person name="Bennett K.L."/>
            <person name="Superti-Furga G."/>
            <person name="Colinge J."/>
        </authorList>
    </citation>
    <scope>IDENTIFICATION BY MASS SPECTROMETRY [LARGE SCALE ANALYSIS]</scope>
</reference>
<reference key="15">
    <citation type="journal article" date="2014" name="J. Proteomics">
        <title>An enzyme assisted RP-RPLC approach for in-depth analysis of human liver phosphoproteome.</title>
        <authorList>
            <person name="Bian Y."/>
            <person name="Song C."/>
            <person name="Cheng K."/>
            <person name="Dong M."/>
            <person name="Wang F."/>
            <person name="Huang J."/>
            <person name="Sun D."/>
            <person name="Wang L."/>
            <person name="Ye M."/>
            <person name="Zou H."/>
        </authorList>
    </citation>
    <scope>IDENTIFICATION BY MASS SPECTROMETRY [LARGE SCALE ANALYSIS]</scope>
    <source>
        <tissue>Liver</tissue>
    </source>
</reference>
<reference key="16">
    <citation type="journal article" date="2015" name="Proteomics">
        <title>N-terminome analysis of the human mitochondrial proteome.</title>
        <authorList>
            <person name="Vaca Jacome A.S."/>
            <person name="Rabilloud T."/>
            <person name="Schaeffer-Reiss C."/>
            <person name="Rompais M."/>
            <person name="Ayoub D."/>
            <person name="Lane L."/>
            <person name="Bairoch A."/>
            <person name="Van Dorsselaer A."/>
            <person name="Carapito C."/>
        </authorList>
    </citation>
    <scope>IDENTIFICATION BY MASS SPECTROMETRY [LARGE SCALE ANALYSIS]</scope>
</reference>
<reference key="17">
    <citation type="journal article" date="2019" name="IScience">
        <title>Rewiring of the Human Mitochondrial Interactome during Neuronal Reprogramming Reveals Regulators of the Respirasome and Neurogenesis.</title>
        <authorList>
            <person name="Moutaoufik M.T."/>
            <person name="Malty R."/>
            <person name="Amin S."/>
            <person name="Zhang Q."/>
            <person name="Phanse S."/>
            <person name="Gagarinova A."/>
            <person name="Zilocchi M."/>
            <person name="Hoell L."/>
            <person name="Minic Z."/>
            <person name="Gagarinova M."/>
            <person name="Aoki H."/>
            <person name="Stockwell J."/>
            <person name="Jessulat M."/>
            <person name="Goebels F."/>
            <person name="Broderick K."/>
            <person name="Scott N.E."/>
            <person name="Vlasblom J."/>
            <person name="Musso G."/>
            <person name="Prasad B."/>
            <person name="Lamantea E."/>
            <person name="Garavaglia B."/>
            <person name="Rajput A."/>
            <person name="Murayama K."/>
            <person name="Okazaki Y."/>
            <person name="Foster L.J."/>
            <person name="Bader G.D."/>
            <person name="Cayabyab F.S."/>
            <person name="Babu M."/>
        </authorList>
    </citation>
    <scope>IDENTIFICATION BY MASS SPECTROMETRY</scope>
    <scope>INTERACTION WITH RAB5IF</scope>
</reference>
<reference key="18">
    <citation type="journal article" date="2004" name="J. Med. Genet.">
        <title>Mutant NDUFS3 subunit of mitochondrial complex I causes Leigh syndrome.</title>
        <authorList>
            <person name="Benit P."/>
            <person name="Slama A."/>
            <person name="Cartault F."/>
            <person name="Giurgea I."/>
            <person name="Chretien D."/>
            <person name="Lebon S."/>
            <person name="Marsac C."/>
            <person name="Munnich A."/>
            <person name="Roetig A."/>
            <person name="Rustin P."/>
        </authorList>
    </citation>
    <scope>INVOLVEMENT IN MC1DN8</scope>
    <scope>VARIANTS MC1DN8 ILE-145 AND TRP-199</scope>
    <scope>CHARACTERIZATION OF VARIANTS MC1DN8 ILE-145 AND TRP-199</scope>
    <scope>FUNCTION</scope>
    <scope>CATALYTIC ACTIVITY</scope>
</reference>
<reference key="19">
    <citation type="journal article" date="2012" name="J. Med. Genet.">
        <title>Molecular diagnosis in mitochondrial complex I deficiency using exome sequencing.</title>
        <authorList>
            <person name="Haack T.B."/>
            <person name="Haberberger B."/>
            <person name="Frisch E.M."/>
            <person name="Wieland T."/>
            <person name="Iuso A."/>
            <person name="Gorza M."/>
            <person name="Strecker V."/>
            <person name="Graf E."/>
            <person name="Mayr J.A."/>
            <person name="Herberg U."/>
            <person name="Hennermann J.B."/>
            <person name="Klopstock T."/>
            <person name="Kuhn K.A."/>
            <person name="Ahting U."/>
            <person name="Sperl W."/>
            <person name="Wilichowski E."/>
            <person name="Hoffmann G.F."/>
            <person name="Tesarova M."/>
            <person name="Hansikova H."/>
            <person name="Zeman J."/>
            <person name="Plecko B."/>
            <person name="Zeviani M."/>
            <person name="Wittig I."/>
            <person name="Strom T.M."/>
            <person name="Schuelke M."/>
            <person name="Freisinger P."/>
            <person name="Meitinger T."/>
            <person name="Prokisch H."/>
        </authorList>
    </citation>
    <scope>INVOLVEMENT IN MC1DN8</scope>
    <scope>VARIANT MC1DN8 TRP-199</scope>
</reference>
<reference key="20">
    <citation type="journal article" date="2013" name="Biochimie">
        <title>Human mitochondrial NDUFS3 protein bearing Leigh syndrome mutation is more prone to aggregation than its wild-type.</title>
        <authorList>
            <person name="Jaokar T.M."/>
            <person name="Patil D.P."/>
            <person name="Shouche Y.S."/>
            <person name="Gaikwad S.M."/>
            <person name="Suresh C.G."/>
        </authorList>
    </citation>
    <scope>CHARACTERIZATION OF VARIANTS MC1DN8 ILE-145 AND TRP-199</scope>
    <scope>FUNCTION</scope>
</reference>
<reference key="21">
    <citation type="journal article" date="2018" name="J. Hum. Genet.">
        <title>A Novel NDUFS3 mutation in a Chinese patient with severe Leigh syndrome.</title>
        <authorList>
            <person name="Lou X."/>
            <person name="Shi H."/>
            <person name="Wen S."/>
            <person name="Li Y."/>
            <person name="Wei X."/>
            <person name="Xie J."/>
            <person name="Ma L."/>
            <person name="Yang Y."/>
            <person name="Fang H."/>
            <person name="Lyu J."/>
        </authorList>
    </citation>
    <scope>VARIANTS MC1DN8 TRP-140 AND TRP-199</scope>
    <scope>CHARACTERIZATION OF VARIANTS MC1DN8 TRP-140 AND TRP-199</scope>
    <scope>FUNCTION</scope>
    <scope>CATALYTIC ACTIVITY</scope>
</reference>
<dbReference type="EC" id="7.1.1.2" evidence="2 9"/>
<dbReference type="EMBL" id="AF067139">
    <property type="protein sequence ID" value="AAC27451.1"/>
    <property type="molecule type" value="mRNA"/>
</dbReference>
<dbReference type="EMBL" id="AF200954">
    <property type="protein sequence ID" value="AAG17541.1"/>
    <property type="molecule type" value="Genomic_DNA"/>
</dbReference>
<dbReference type="EMBL" id="AF100743">
    <property type="protein sequence ID" value="AAD40386.1"/>
    <property type="molecule type" value="mRNA"/>
</dbReference>
<dbReference type="EMBL" id="AK294167">
    <property type="protein sequence ID" value="BAG57489.1"/>
    <property type="molecule type" value="mRNA"/>
</dbReference>
<dbReference type="EMBL" id="AK313802">
    <property type="protein sequence ID" value="BAG36538.1"/>
    <property type="molecule type" value="mRNA"/>
</dbReference>
<dbReference type="EMBL" id="AC090559">
    <property type="status" value="NOT_ANNOTATED_CDS"/>
    <property type="molecule type" value="Genomic_DNA"/>
</dbReference>
<dbReference type="EMBL" id="AC104942">
    <property type="status" value="NOT_ANNOTATED_CDS"/>
    <property type="molecule type" value="Genomic_DNA"/>
</dbReference>
<dbReference type="EMBL" id="CH471064">
    <property type="protein sequence ID" value="EAW67895.1"/>
    <property type="molecule type" value="Genomic_DNA"/>
</dbReference>
<dbReference type="EMBL" id="BC000617">
    <property type="protein sequence ID" value="AAH00617.1"/>
    <property type="molecule type" value="mRNA"/>
</dbReference>
<dbReference type="CCDS" id="CCDS7941.1">
    <molecule id="O75489-1"/>
</dbReference>
<dbReference type="PIR" id="JE0195">
    <property type="entry name" value="JE0195"/>
</dbReference>
<dbReference type="RefSeq" id="NP_004542.1">
    <molecule id="O75489-1"/>
    <property type="nucleotide sequence ID" value="NM_004551.3"/>
</dbReference>
<dbReference type="PDB" id="5XTB">
    <property type="method" value="EM"/>
    <property type="resolution" value="3.40 A"/>
    <property type="chains" value="P=43-250"/>
</dbReference>
<dbReference type="PDB" id="5XTD">
    <property type="method" value="EM"/>
    <property type="resolution" value="3.70 A"/>
    <property type="chains" value="P=43-250"/>
</dbReference>
<dbReference type="PDB" id="5XTH">
    <property type="method" value="EM"/>
    <property type="resolution" value="3.90 A"/>
    <property type="chains" value="P=43-250"/>
</dbReference>
<dbReference type="PDB" id="5XTI">
    <property type="method" value="EM"/>
    <property type="resolution" value="17.40 A"/>
    <property type="chains" value="BP/P=43-250"/>
</dbReference>
<dbReference type="PDBsum" id="5XTB"/>
<dbReference type="PDBsum" id="5XTD"/>
<dbReference type="PDBsum" id="5XTH"/>
<dbReference type="PDBsum" id="5XTI"/>
<dbReference type="SMR" id="O75489"/>
<dbReference type="BioGRID" id="110801">
    <property type="interactions" value="400"/>
</dbReference>
<dbReference type="ComplexPortal" id="CPX-577">
    <property type="entry name" value="Mitochondrial respiratory chain complex I"/>
</dbReference>
<dbReference type="CORUM" id="O75489"/>
<dbReference type="FunCoup" id="O75489">
    <property type="interactions" value="1630"/>
</dbReference>
<dbReference type="IntAct" id="O75489">
    <property type="interactions" value="212"/>
</dbReference>
<dbReference type="MINT" id="O75489"/>
<dbReference type="STRING" id="9606.ENSP00000263774"/>
<dbReference type="BindingDB" id="O75489"/>
<dbReference type="ChEMBL" id="CHEMBL2363065"/>
<dbReference type="DrugBank" id="DB00997">
    <property type="generic name" value="Doxorubicin"/>
</dbReference>
<dbReference type="DrugBank" id="DB00157">
    <property type="generic name" value="NADH"/>
</dbReference>
<dbReference type="DrugCentral" id="O75489"/>
<dbReference type="CarbonylDB" id="O75489"/>
<dbReference type="GlyCosmos" id="O75489">
    <property type="glycosylation" value="1 site, 1 glycan"/>
</dbReference>
<dbReference type="GlyGen" id="O75489">
    <property type="glycosylation" value="1 site, 1 O-linked glycan (1 site)"/>
</dbReference>
<dbReference type="iPTMnet" id="O75489"/>
<dbReference type="PhosphoSitePlus" id="O75489"/>
<dbReference type="SwissPalm" id="O75489"/>
<dbReference type="BioMuta" id="NDUFS3"/>
<dbReference type="REPRODUCTION-2DPAGE" id="IPI00025796"/>
<dbReference type="REPRODUCTION-2DPAGE" id="O75489"/>
<dbReference type="CPTAC" id="CPTAC-100"/>
<dbReference type="CPTAC" id="CPTAC-99"/>
<dbReference type="jPOST" id="O75489"/>
<dbReference type="MassIVE" id="O75489"/>
<dbReference type="PaxDb" id="9606-ENSP00000263774"/>
<dbReference type="PeptideAtlas" id="O75489"/>
<dbReference type="ProteomicsDB" id="4061"/>
<dbReference type="ProteomicsDB" id="50046">
    <molecule id="O75489-1"/>
</dbReference>
<dbReference type="Pumba" id="O75489"/>
<dbReference type="TopDownProteomics" id="O75489-1">
    <molecule id="O75489-1"/>
</dbReference>
<dbReference type="Antibodypedia" id="1262">
    <property type="antibodies" value="312 antibodies from 34 providers"/>
</dbReference>
<dbReference type="DNASU" id="4722"/>
<dbReference type="Ensembl" id="ENST00000263774.9">
    <molecule id="O75489-1"/>
    <property type="protein sequence ID" value="ENSP00000263774.4"/>
    <property type="gene ID" value="ENSG00000213619.11"/>
</dbReference>
<dbReference type="GeneID" id="4722"/>
<dbReference type="KEGG" id="hsa:4722"/>
<dbReference type="MANE-Select" id="ENST00000263774.9">
    <property type="protein sequence ID" value="ENSP00000263774.4"/>
    <property type="RefSeq nucleotide sequence ID" value="NM_004551.3"/>
    <property type="RefSeq protein sequence ID" value="NP_004542.1"/>
</dbReference>
<dbReference type="UCSC" id="uc001nga.3">
    <molecule id="O75489-1"/>
    <property type="organism name" value="human"/>
</dbReference>
<dbReference type="AGR" id="HGNC:7710"/>
<dbReference type="CTD" id="4722"/>
<dbReference type="DisGeNET" id="4722"/>
<dbReference type="GeneCards" id="NDUFS3"/>
<dbReference type="GeneReviews" id="NDUFS3"/>
<dbReference type="HGNC" id="HGNC:7710">
    <property type="gene designation" value="NDUFS3"/>
</dbReference>
<dbReference type="HPA" id="ENSG00000213619">
    <property type="expression patterns" value="Tissue enhanced (skeletal)"/>
</dbReference>
<dbReference type="MalaCards" id="NDUFS3"/>
<dbReference type="MIM" id="603846">
    <property type="type" value="gene"/>
</dbReference>
<dbReference type="MIM" id="618230">
    <property type="type" value="phenotype"/>
</dbReference>
<dbReference type="neXtProt" id="NX_O75489"/>
<dbReference type="OpenTargets" id="ENSG00000213619"/>
<dbReference type="Orphanet" id="2609">
    <property type="disease" value="Isolated complex I deficiency"/>
</dbReference>
<dbReference type="PharmGKB" id="PA31520"/>
<dbReference type="VEuPathDB" id="HostDB:ENSG00000213619"/>
<dbReference type="eggNOG" id="KOG1713">
    <property type="taxonomic scope" value="Eukaryota"/>
</dbReference>
<dbReference type="GeneTree" id="ENSGT00390000017480"/>
<dbReference type="HOGENOM" id="CLU_042628_0_1_1"/>
<dbReference type="InParanoid" id="O75489"/>
<dbReference type="OMA" id="PCRKNRF"/>
<dbReference type="OrthoDB" id="37721at2759"/>
<dbReference type="PAN-GO" id="O75489">
    <property type="GO annotations" value="1 GO annotation based on evolutionary models"/>
</dbReference>
<dbReference type="PhylomeDB" id="O75489"/>
<dbReference type="TreeFam" id="TF314794"/>
<dbReference type="BioCyc" id="MetaCyc:G66-32694-MONOMER"/>
<dbReference type="PathwayCommons" id="O75489"/>
<dbReference type="Reactome" id="R-HSA-611105">
    <property type="pathway name" value="Respiratory electron transport"/>
</dbReference>
<dbReference type="Reactome" id="R-HSA-6799198">
    <property type="pathway name" value="Complex I biogenesis"/>
</dbReference>
<dbReference type="Reactome" id="R-HSA-9013408">
    <property type="pathway name" value="RHOG GTPase cycle"/>
</dbReference>
<dbReference type="Reactome" id="R-HSA-9837999">
    <property type="pathway name" value="Mitochondrial protein degradation"/>
</dbReference>
<dbReference type="SignaLink" id="O75489"/>
<dbReference type="SIGNOR" id="O75489"/>
<dbReference type="BioGRID-ORCS" id="4722">
    <property type="hits" value="223 hits in 1164 CRISPR screens"/>
</dbReference>
<dbReference type="CD-CODE" id="91857CE7">
    <property type="entry name" value="Nucleolus"/>
</dbReference>
<dbReference type="CD-CODE" id="FB4E32DD">
    <property type="entry name" value="Presynaptic clusters and postsynaptic densities"/>
</dbReference>
<dbReference type="ChiTaRS" id="NDUFS3">
    <property type="organism name" value="human"/>
</dbReference>
<dbReference type="GeneWiki" id="NDUFS3"/>
<dbReference type="GenomeRNAi" id="4722"/>
<dbReference type="Pharos" id="O75489">
    <property type="development level" value="Tclin"/>
</dbReference>
<dbReference type="PRO" id="PR:O75489"/>
<dbReference type="Proteomes" id="UP000005640">
    <property type="component" value="Chromosome 11"/>
</dbReference>
<dbReference type="RNAct" id="O75489">
    <property type="molecule type" value="protein"/>
</dbReference>
<dbReference type="Bgee" id="ENSG00000213619">
    <property type="expression patterns" value="Expressed in putamen and 100 other cell types or tissues"/>
</dbReference>
<dbReference type="ExpressionAtlas" id="O75489">
    <property type="expression patterns" value="baseline and differential"/>
</dbReference>
<dbReference type="GO" id="GO:0005743">
    <property type="term" value="C:mitochondrial inner membrane"/>
    <property type="evidence" value="ECO:0000314"/>
    <property type="project" value="UniProtKB"/>
</dbReference>
<dbReference type="GO" id="GO:0005759">
    <property type="term" value="C:mitochondrial matrix"/>
    <property type="evidence" value="ECO:0000304"/>
    <property type="project" value="Reactome"/>
</dbReference>
<dbReference type="GO" id="GO:0031966">
    <property type="term" value="C:mitochondrial membrane"/>
    <property type="evidence" value="ECO:0000314"/>
    <property type="project" value="UniProtKB"/>
</dbReference>
<dbReference type="GO" id="GO:0005739">
    <property type="term" value="C:mitochondrion"/>
    <property type="evidence" value="ECO:0000314"/>
    <property type="project" value="HPA"/>
</dbReference>
<dbReference type="GO" id="GO:0016604">
    <property type="term" value="C:nuclear body"/>
    <property type="evidence" value="ECO:0000314"/>
    <property type="project" value="HPA"/>
</dbReference>
<dbReference type="GO" id="GO:0045271">
    <property type="term" value="C:respiratory chain complex I"/>
    <property type="evidence" value="ECO:0000314"/>
    <property type="project" value="UniProtKB"/>
</dbReference>
<dbReference type="GO" id="GO:0009055">
    <property type="term" value="F:electron transfer activity"/>
    <property type="evidence" value="ECO:0000303"/>
    <property type="project" value="UniProtKB"/>
</dbReference>
<dbReference type="GO" id="GO:0008137">
    <property type="term" value="F:NADH dehydrogenase (ubiquinone) activity"/>
    <property type="evidence" value="ECO:0000315"/>
    <property type="project" value="UniProtKB"/>
</dbReference>
<dbReference type="GO" id="GO:0003954">
    <property type="term" value="F:NADH dehydrogenase activity"/>
    <property type="evidence" value="ECO:0000315"/>
    <property type="project" value="UniProtKB"/>
</dbReference>
<dbReference type="GO" id="GO:0009060">
    <property type="term" value="P:aerobic respiration"/>
    <property type="evidence" value="ECO:0000303"/>
    <property type="project" value="ComplexPortal"/>
</dbReference>
<dbReference type="GO" id="GO:0006120">
    <property type="term" value="P:mitochondrial electron transport, NADH to ubiquinone"/>
    <property type="evidence" value="ECO:0000315"/>
    <property type="project" value="UniProtKB"/>
</dbReference>
<dbReference type="GO" id="GO:0032981">
    <property type="term" value="P:mitochondrial respiratory chain complex I assembly"/>
    <property type="evidence" value="ECO:0000315"/>
    <property type="project" value="UniProtKB"/>
</dbReference>
<dbReference type="GO" id="GO:0042776">
    <property type="term" value="P:proton motive force-driven mitochondrial ATP synthesis"/>
    <property type="evidence" value="ECO:0000303"/>
    <property type="project" value="ComplexPortal"/>
</dbReference>
<dbReference type="GO" id="GO:0072593">
    <property type="term" value="P:reactive oxygen species metabolic process"/>
    <property type="evidence" value="ECO:0000315"/>
    <property type="project" value="UniProtKB"/>
</dbReference>
<dbReference type="GO" id="GO:0021762">
    <property type="term" value="P:substantia nigra development"/>
    <property type="evidence" value="ECO:0007007"/>
    <property type="project" value="UniProtKB"/>
</dbReference>
<dbReference type="FunFam" id="3.30.460.80:FF:000002">
    <property type="entry name" value="NADH dehydrogenase iron-sulfur protein 3, mitochondrial"/>
    <property type="match status" value="1"/>
</dbReference>
<dbReference type="Gene3D" id="3.30.460.80">
    <property type="entry name" value="NADH:ubiquinone oxidoreductase, 30kDa subunit"/>
    <property type="match status" value="1"/>
</dbReference>
<dbReference type="HAMAP" id="MF_01357">
    <property type="entry name" value="NDH1_NuoC"/>
    <property type="match status" value="1"/>
</dbReference>
<dbReference type="InterPro" id="IPR010218">
    <property type="entry name" value="NADH_DH_suC"/>
</dbReference>
<dbReference type="InterPro" id="IPR037232">
    <property type="entry name" value="NADH_quin_OxRdtase_su_C/D-like"/>
</dbReference>
<dbReference type="InterPro" id="IPR001268">
    <property type="entry name" value="NADH_UbQ_OxRdtase_30kDa_su"/>
</dbReference>
<dbReference type="InterPro" id="IPR020396">
    <property type="entry name" value="NADH_UbQ_OxRdtase_CS"/>
</dbReference>
<dbReference type="NCBIfam" id="TIGR01961">
    <property type="entry name" value="NuoC_fam"/>
    <property type="match status" value="1"/>
</dbReference>
<dbReference type="NCBIfam" id="NF004733">
    <property type="entry name" value="PRK06074.1-5"/>
    <property type="match status" value="1"/>
</dbReference>
<dbReference type="PANTHER" id="PTHR10884:SF14">
    <property type="entry name" value="NADH DEHYDROGENASE [UBIQUINONE] IRON-SULFUR PROTEIN 3, MITOCHONDRIAL"/>
    <property type="match status" value="1"/>
</dbReference>
<dbReference type="PANTHER" id="PTHR10884">
    <property type="entry name" value="NADH DEHYDROGENASE UBIQUINONE IRON-SULFUR PROTEIN 3"/>
    <property type="match status" value="1"/>
</dbReference>
<dbReference type="Pfam" id="PF00329">
    <property type="entry name" value="Complex1_30kDa"/>
    <property type="match status" value="1"/>
</dbReference>
<dbReference type="SUPFAM" id="SSF143243">
    <property type="entry name" value="Nqo5-like"/>
    <property type="match status" value="1"/>
</dbReference>
<dbReference type="PROSITE" id="PS00542">
    <property type="entry name" value="COMPLEX1_30K"/>
    <property type="match status" value="1"/>
</dbReference>
<feature type="transit peptide" description="Mitochondrion" evidence="6">
    <location>
        <begin position="1"/>
        <end position="36"/>
    </location>
</feature>
<feature type="chain" id="PRO_0000019998" description="NADH dehydrogenase [ubiquinone] iron-sulfur protein 3, mitochondrial">
    <location>
        <begin position="37"/>
        <end position="264"/>
    </location>
</feature>
<feature type="splice variant" id="VSP_057065" description="In isoform 2." evidence="11">
    <original>IVYNL</original>
    <variation>VSWEI</variation>
    <location>
        <begin position="128"/>
        <end position="132"/>
    </location>
</feature>
<feature type="splice variant" id="VSP_057066" description="In isoform 2." evidence="11">
    <location>
        <begin position="133"/>
        <end position="264"/>
    </location>
</feature>
<feature type="sequence variant" id="VAR_081411" description="In MC1DN8; uncertain significance; decrease in enzyme activity; impaired assembly of complex I; dbSNP:rs142248674." evidence="9">
    <original>R</original>
    <variation>W</variation>
    <location>
        <position position="140"/>
    </location>
</feature>
<feature type="sequence variant" id="VAR_081412" description="In MC1DN8; decrease in enzyme activity; increased protein instability and aggregation; compound heterozygous with W-199; dbSNP:rs28939714." evidence="2 8">
    <original>T</original>
    <variation>I</variation>
    <location>
        <position position="145"/>
    </location>
</feature>
<feature type="sequence variant" id="VAR_081413" description="In MC1DN8; decrease in enzyme activity; impaired assembly of complex I; increased protein instability and aggregation; compound heterozygous with I-145; dbSNP:rs104894270." evidence="2 7 8 9">
    <original>R</original>
    <variation>W</variation>
    <location>
        <position position="199"/>
    </location>
</feature>
<feature type="sequence variant" id="VAR_012036" description="In dbSNP:rs9600.">
    <original>P</original>
    <variation>Q</variation>
    <location>
        <position position="249"/>
    </location>
</feature>
<feature type="sequence conflict" description="In Ref. 3." evidence="12" ref="3">
    <original>MAAAAVA</original>
    <variation>MAAGRY</variation>
    <location>
        <begin position="1"/>
        <end position="7"/>
    </location>
</feature>
<feature type="strand" evidence="16">
    <location>
        <begin position="45"/>
        <end position="47"/>
    </location>
</feature>
<feature type="helix" evidence="16">
    <location>
        <begin position="52"/>
        <end position="68"/>
    </location>
</feature>
<feature type="turn" evidence="16">
    <location>
        <begin position="70"/>
        <end position="72"/>
    </location>
</feature>
<feature type="strand" evidence="16">
    <location>
        <begin position="76"/>
        <end position="78"/>
    </location>
</feature>
<feature type="strand" evidence="16">
    <location>
        <begin position="84"/>
        <end position="87"/>
    </location>
</feature>
<feature type="helix" evidence="16">
    <location>
        <begin position="90"/>
        <end position="92"/>
    </location>
</feature>
<feature type="helix" evidence="16">
    <location>
        <begin position="93"/>
        <end position="101"/>
    </location>
</feature>
<feature type="strand" evidence="16">
    <location>
        <begin position="113"/>
        <end position="115"/>
    </location>
</feature>
<feature type="strand" evidence="16">
    <location>
        <begin position="120"/>
        <end position="124"/>
    </location>
</feature>
<feature type="strand" evidence="16">
    <location>
        <begin position="129"/>
        <end position="134"/>
    </location>
</feature>
<feature type="turn" evidence="16">
    <location>
        <begin position="135"/>
        <end position="138"/>
    </location>
</feature>
<feature type="strand" evidence="16">
    <location>
        <begin position="139"/>
        <end position="144"/>
    </location>
</feature>
<feature type="turn" evidence="16">
    <location>
        <begin position="156"/>
        <end position="160"/>
    </location>
</feature>
<feature type="helix" evidence="16">
    <location>
        <begin position="162"/>
        <end position="164"/>
    </location>
</feature>
<feature type="helix" evidence="16">
    <location>
        <begin position="165"/>
        <end position="172"/>
    </location>
</feature>
<feature type="strand" evidence="16">
    <location>
        <begin position="178"/>
        <end position="180"/>
    </location>
</feature>
<feature type="strand" evidence="16">
    <location>
        <begin position="187"/>
        <end position="189"/>
    </location>
</feature>
<feature type="strand" evidence="16">
    <location>
        <begin position="207"/>
        <end position="213"/>
    </location>
</feature>
<feature type="turn" evidence="16">
    <location>
        <begin position="214"/>
        <end position="217"/>
    </location>
</feature>
<feature type="strand" evidence="16">
    <location>
        <begin position="218"/>
        <end position="223"/>
    </location>
</feature>
<name>NDUS3_HUMAN</name>
<gene>
    <name type="primary">NDUFS3</name>
</gene>
<keyword id="KW-0002">3D-structure</keyword>
<keyword id="KW-0025">Alternative splicing</keyword>
<keyword id="KW-0903">Direct protein sequencing</keyword>
<keyword id="KW-0225">Disease variant</keyword>
<keyword id="KW-0249">Electron transport</keyword>
<keyword id="KW-0472">Membrane</keyword>
<keyword id="KW-0496">Mitochondrion</keyword>
<keyword id="KW-0999">Mitochondrion inner membrane</keyword>
<keyword id="KW-0520">NAD</keyword>
<keyword id="KW-0560">Oxidoreductase</keyword>
<keyword id="KW-1274">Primary mitochondrial disease</keyword>
<keyword id="KW-1267">Proteomics identification</keyword>
<keyword id="KW-1185">Reference proteome</keyword>
<keyword id="KW-0679">Respiratory chain</keyword>
<keyword id="KW-0809">Transit peptide</keyword>
<keyword id="KW-1278">Translocase</keyword>
<keyword id="KW-0813">Transport</keyword>
<keyword id="KW-0830">Ubiquinone</keyword>
<organism>
    <name type="scientific">Homo sapiens</name>
    <name type="common">Human</name>
    <dbReference type="NCBI Taxonomy" id="9606"/>
    <lineage>
        <taxon>Eukaryota</taxon>
        <taxon>Metazoa</taxon>
        <taxon>Chordata</taxon>
        <taxon>Craniata</taxon>
        <taxon>Vertebrata</taxon>
        <taxon>Euteleostomi</taxon>
        <taxon>Mammalia</taxon>
        <taxon>Eutheria</taxon>
        <taxon>Euarchontoglires</taxon>
        <taxon>Primates</taxon>
        <taxon>Haplorrhini</taxon>
        <taxon>Catarrhini</taxon>
        <taxon>Hominidae</taxon>
        <taxon>Homo</taxon>
    </lineage>
</organism>
<accession>O75489</accession>
<accession>B2R9J1</accession>
<accession>B4DFM8</accession>
<accession>Q9UNQ8</accession>
<protein>
    <recommendedName>
        <fullName>NADH dehydrogenase [ubiquinone] iron-sulfur protein 3, mitochondrial</fullName>
        <ecNumber evidence="2 9">7.1.1.2</ecNumber>
    </recommendedName>
    <alternativeName>
        <fullName>Complex I-30kD</fullName>
        <shortName>CI-30kD</shortName>
    </alternativeName>
    <alternativeName>
        <fullName>NADH-ubiquinone oxidoreductase 30 kDa subunit</fullName>
    </alternativeName>
</protein>